<accession>Q755X2</accession>
<name>ATG8_EREGS</name>
<feature type="chain" id="PRO_0000017206" description="Autophagy-related protein 8">
    <location>
        <begin position="1"/>
        <end position="115"/>
    </location>
</feature>
<feature type="propeptide" id="PRO_0000017207" description="Removed in mature form" evidence="1">
    <location>
        <begin position="116"/>
        <end position="120"/>
    </location>
</feature>
<feature type="site" description="Cleavage; by ATG4" evidence="1">
    <location>
        <begin position="115"/>
        <end position="116"/>
    </location>
</feature>
<feature type="lipid moiety-binding region" description="Phosphatidylethanolamine amidated glycine" evidence="1">
    <location>
        <position position="115"/>
    </location>
</feature>
<sequence>MSSFKSEYPFEKRKAESERICSQFENRVPVICERAEKSDIPEVDRRKYLVPADLTVGQFVYVIRRRIKLPAEKAIFIFVNDTLPPTAALMFAVYQEHKDKDGFLYVKYSGENTFGSEENQ</sequence>
<evidence type="ECO:0000250" key="1">
    <source>
        <dbReference type="UniProtKB" id="P38182"/>
    </source>
</evidence>
<evidence type="ECO:0000305" key="2"/>
<organism>
    <name type="scientific">Eremothecium gossypii (strain ATCC 10895 / CBS 109.51 / FGSC 9923 / NRRL Y-1056)</name>
    <name type="common">Yeast</name>
    <name type="synonym">Ashbya gossypii</name>
    <dbReference type="NCBI Taxonomy" id="284811"/>
    <lineage>
        <taxon>Eukaryota</taxon>
        <taxon>Fungi</taxon>
        <taxon>Dikarya</taxon>
        <taxon>Ascomycota</taxon>
        <taxon>Saccharomycotina</taxon>
        <taxon>Saccharomycetes</taxon>
        <taxon>Saccharomycetales</taxon>
        <taxon>Saccharomycetaceae</taxon>
        <taxon>Eremothecium</taxon>
    </lineage>
</organism>
<dbReference type="EMBL" id="AE016818">
    <property type="protein sequence ID" value="AAS53075.1"/>
    <property type="molecule type" value="Genomic_DNA"/>
</dbReference>
<dbReference type="RefSeq" id="NP_985251.1">
    <property type="nucleotide sequence ID" value="NM_210605.1"/>
</dbReference>
<dbReference type="SMR" id="Q755X2"/>
<dbReference type="FunCoup" id="Q755X2">
    <property type="interactions" value="603"/>
</dbReference>
<dbReference type="STRING" id="284811.Q755X2"/>
<dbReference type="EnsemblFungi" id="AAS53075">
    <property type="protein sequence ID" value="AAS53075"/>
    <property type="gene ID" value="AGOS_AER396W"/>
</dbReference>
<dbReference type="GeneID" id="4621467"/>
<dbReference type="KEGG" id="ago:AGOS_AER396W"/>
<dbReference type="eggNOG" id="KOG1654">
    <property type="taxonomic scope" value="Eukaryota"/>
</dbReference>
<dbReference type="HOGENOM" id="CLU_119276_0_1_1"/>
<dbReference type="InParanoid" id="Q755X2"/>
<dbReference type="OMA" id="AVYQEHK"/>
<dbReference type="OrthoDB" id="6738456at2759"/>
<dbReference type="Proteomes" id="UP000000591">
    <property type="component" value="Chromosome V"/>
</dbReference>
<dbReference type="GO" id="GO:0000421">
    <property type="term" value="C:autophagosome membrane"/>
    <property type="evidence" value="ECO:0000318"/>
    <property type="project" value="GO_Central"/>
</dbReference>
<dbReference type="GO" id="GO:0031410">
    <property type="term" value="C:cytoplasmic vesicle"/>
    <property type="evidence" value="ECO:0007669"/>
    <property type="project" value="UniProtKB-KW"/>
</dbReference>
<dbReference type="GO" id="GO:0000329">
    <property type="term" value="C:fungal-type vacuole membrane"/>
    <property type="evidence" value="ECO:0000318"/>
    <property type="project" value="GO_Central"/>
</dbReference>
<dbReference type="GO" id="GO:0008429">
    <property type="term" value="F:phosphatidylethanolamine binding"/>
    <property type="evidence" value="ECO:0000318"/>
    <property type="project" value="GO_Central"/>
</dbReference>
<dbReference type="GO" id="GO:0000045">
    <property type="term" value="P:autophagosome assembly"/>
    <property type="evidence" value="ECO:0000318"/>
    <property type="project" value="GO_Central"/>
</dbReference>
<dbReference type="GO" id="GO:0097352">
    <property type="term" value="P:autophagosome maturation"/>
    <property type="evidence" value="ECO:0000318"/>
    <property type="project" value="GO_Central"/>
</dbReference>
<dbReference type="GO" id="GO:0006995">
    <property type="term" value="P:cellular response to nitrogen starvation"/>
    <property type="evidence" value="ECO:0000318"/>
    <property type="project" value="GO_Central"/>
</dbReference>
<dbReference type="GO" id="GO:0000423">
    <property type="term" value="P:mitophagy"/>
    <property type="evidence" value="ECO:0000318"/>
    <property type="project" value="GO_Central"/>
</dbReference>
<dbReference type="GO" id="GO:0015031">
    <property type="term" value="P:protein transport"/>
    <property type="evidence" value="ECO:0007669"/>
    <property type="project" value="UniProtKB-KW"/>
</dbReference>
<dbReference type="CDD" id="cd16128">
    <property type="entry name" value="Ubl_ATG8"/>
    <property type="match status" value="1"/>
</dbReference>
<dbReference type="Gene3D" id="3.10.20.90">
    <property type="entry name" value="Phosphatidylinositol 3-kinase Catalytic Subunit, Chain A, domain 1"/>
    <property type="match status" value="1"/>
</dbReference>
<dbReference type="InterPro" id="IPR004241">
    <property type="entry name" value="Atg8-like"/>
</dbReference>
<dbReference type="InterPro" id="IPR029071">
    <property type="entry name" value="Ubiquitin-like_domsf"/>
</dbReference>
<dbReference type="PANTHER" id="PTHR10969">
    <property type="entry name" value="MICROTUBULE-ASSOCIATED PROTEINS 1A/1B LIGHT CHAIN 3-RELATED"/>
    <property type="match status" value="1"/>
</dbReference>
<dbReference type="Pfam" id="PF02991">
    <property type="entry name" value="ATG8"/>
    <property type="match status" value="1"/>
</dbReference>
<dbReference type="SUPFAM" id="SSF54236">
    <property type="entry name" value="Ubiquitin-like"/>
    <property type="match status" value="1"/>
</dbReference>
<proteinExistence type="inferred from homology"/>
<gene>
    <name type="primary">ATG8</name>
    <name type="ordered locus">AER396W</name>
</gene>
<protein>
    <recommendedName>
        <fullName>Autophagy-related protein 8</fullName>
    </recommendedName>
    <alternativeName>
        <fullName>Autophagy-related ubiquitin-like modifier ATG8</fullName>
    </alternativeName>
</protein>
<comment type="function">
    <text evidence="1">Ubiquitin-like modifier involved in autophagosome formation. With ATG4, mediates the delivery of the autophagosomes to the vacuole via the microtubule cytoskeleton. Required for selective autophagic degradation of the nucleus (nucleophagy) as well as for mitophagy which contributes to regulate mitochondrial quantity and quality by eliminating the mitochondria to a basal level to fulfill cellular energy requirements and preventing excess ROS production. Participates also in membrane fusion events that take place in the early secretory pathway. Also involved in endoplasmic reticulum-specific autophagic process and is essential for the survival of cells subjected to severe ER stress. The ATG8-PE conjugate mediates tethering between adjacent membranes and stimulates membrane hemifusion, leading to expansion of the autophagosomal membrane during autophagy.</text>
</comment>
<comment type="subcellular location">
    <subcellularLocation>
        <location evidence="1">Cytoplasmic vesicle</location>
        <location evidence="1">Autophagosome membrane</location>
        <topology evidence="1">Lipid-anchor</topology>
    </subcellularLocation>
    <subcellularLocation>
        <location evidence="1">Vacuole membrane</location>
        <topology evidence="1">Lipid-anchor</topology>
    </subcellularLocation>
</comment>
<comment type="PTM">
    <text evidence="1">The C-terminal 5 residues are removed by ATG4 to expose Gly-115 at the C-terminus. The C-terminal Gly is then amidated with phosphatidylethanolamine by an activating system similar to that for ubiquitin.</text>
</comment>
<comment type="similarity">
    <text evidence="2">Belongs to the ATG8 family.</text>
</comment>
<keyword id="KW-0072">Autophagy</keyword>
<keyword id="KW-0968">Cytoplasmic vesicle</keyword>
<keyword id="KW-0449">Lipoprotein</keyword>
<keyword id="KW-0472">Membrane</keyword>
<keyword id="KW-0653">Protein transport</keyword>
<keyword id="KW-1185">Reference proteome</keyword>
<keyword id="KW-0813">Transport</keyword>
<keyword id="KW-0833">Ubl conjugation pathway</keyword>
<keyword id="KW-0926">Vacuole</keyword>
<reference key="1">
    <citation type="journal article" date="2004" name="Science">
        <title>The Ashbya gossypii genome as a tool for mapping the ancient Saccharomyces cerevisiae genome.</title>
        <authorList>
            <person name="Dietrich F.S."/>
            <person name="Voegeli S."/>
            <person name="Brachat S."/>
            <person name="Lerch A."/>
            <person name="Gates K."/>
            <person name="Steiner S."/>
            <person name="Mohr C."/>
            <person name="Poehlmann R."/>
            <person name="Luedi P."/>
            <person name="Choi S."/>
            <person name="Wing R.A."/>
            <person name="Flavier A."/>
            <person name="Gaffney T.D."/>
            <person name="Philippsen P."/>
        </authorList>
    </citation>
    <scope>NUCLEOTIDE SEQUENCE [LARGE SCALE GENOMIC DNA]</scope>
    <source>
        <strain>ATCC 10895 / CBS 109.51 / FGSC 9923 / NRRL Y-1056</strain>
    </source>
</reference>
<reference key="2">
    <citation type="journal article" date="2013" name="G3 (Bethesda)">
        <title>Genomes of Ashbya fungi isolated from insects reveal four mating-type loci, numerous translocations, lack of transposons, and distinct gene duplications.</title>
        <authorList>
            <person name="Dietrich F.S."/>
            <person name="Voegeli S."/>
            <person name="Kuo S."/>
            <person name="Philippsen P."/>
        </authorList>
    </citation>
    <scope>GENOME REANNOTATION</scope>
    <source>
        <strain>ATCC 10895 / CBS 109.51 / FGSC 9923 / NRRL Y-1056</strain>
    </source>
</reference>